<protein>
    <recommendedName>
        <fullName evidence="1">Polyribonucleotide nucleotidyltransferase</fullName>
        <ecNumber evidence="1">2.7.7.8</ecNumber>
    </recommendedName>
    <alternativeName>
        <fullName evidence="1">Polynucleotide phosphorylase</fullName>
        <shortName evidence="1">PNPase</shortName>
    </alternativeName>
</protein>
<gene>
    <name evidence="1" type="primary">pnp</name>
    <name type="ordered locus">KPN78578_35430</name>
    <name type="ORF">KPN_03572</name>
</gene>
<accession>A6TEI3</accession>
<name>PNP_KLEP7</name>
<proteinExistence type="inferred from homology"/>
<evidence type="ECO:0000255" key="1">
    <source>
        <dbReference type="HAMAP-Rule" id="MF_01595"/>
    </source>
</evidence>
<evidence type="ECO:0000256" key="2">
    <source>
        <dbReference type="SAM" id="MobiDB-lite"/>
    </source>
</evidence>
<keyword id="KW-0963">Cytoplasm</keyword>
<keyword id="KW-0460">Magnesium</keyword>
<keyword id="KW-0479">Metal-binding</keyword>
<keyword id="KW-0548">Nucleotidyltransferase</keyword>
<keyword id="KW-0694">RNA-binding</keyword>
<keyword id="KW-0808">Transferase</keyword>
<organism>
    <name type="scientific">Klebsiella pneumoniae subsp. pneumoniae (strain ATCC 700721 / MGH 78578)</name>
    <dbReference type="NCBI Taxonomy" id="272620"/>
    <lineage>
        <taxon>Bacteria</taxon>
        <taxon>Pseudomonadati</taxon>
        <taxon>Pseudomonadota</taxon>
        <taxon>Gammaproteobacteria</taxon>
        <taxon>Enterobacterales</taxon>
        <taxon>Enterobacteriaceae</taxon>
        <taxon>Klebsiella/Raoultella group</taxon>
        <taxon>Klebsiella</taxon>
        <taxon>Klebsiella pneumoniae complex</taxon>
    </lineage>
</organism>
<dbReference type="EC" id="2.7.7.8" evidence="1"/>
<dbReference type="EMBL" id="CP000647">
    <property type="protein sequence ID" value="ABR78967.1"/>
    <property type="molecule type" value="Genomic_DNA"/>
</dbReference>
<dbReference type="SMR" id="A6TEI3"/>
<dbReference type="STRING" id="272620.KPN_03572"/>
<dbReference type="jPOST" id="A6TEI3"/>
<dbReference type="PaxDb" id="272620-KPN_03572"/>
<dbReference type="EnsemblBacteria" id="ABR78967">
    <property type="protein sequence ID" value="ABR78967"/>
    <property type="gene ID" value="KPN_03572"/>
</dbReference>
<dbReference type="KEGG" id="kpn:KPN_03572"/>
<dbReference type="HOGENOM" id="CLU_004217_2_2_6"/>
<dbReference type="Proteomes" id="UP000000265">
    <property type="component" value="Chromosome"/>
</dbReference>
<dbReference type="GO" id="GO:0005829">
    <property type="term" value="C:cytosol"/>
    <property type="evidence" value="ECO:0007669"/>
    <property type="project" value="TreeGrafter"/>
</dbReference>
<dbReference type="GO" id="GO:0000175">
    <property type="term" value="F:3'-5'-RNA exonuclease activity"/>
    <property type="evidence" value="ECO:0007669"/>
    <property type="project" value="TreeGrafter"/>
</dbReference>
<dbReference type="GO" id="GO:0000287">
    <property type="term" value="F:magnesium ion binding"/>
    <property type="evidence" value="ECO:0007669"/>
    <property type="project" value="UniProtKB-UniRule"/>
</dbReference>
<dbReference type="GO" id="GO:0004654">
    <property type="term" value="F:polyribonucleotide nucleotidyltransferase activity"/>
    <property type="evidence" value="ECO:0007669"/>
    <property type="project" value="UniProtKB-UniRule"/>
</dbReference>
<dbReference type="GO" id="GO:0003723">
    <property type="term" value="F:RNA binding"/>
    <property type="evidence" value="ECO:0007669"/>
    <property type="project" value="UniProtKB-UniRule"/>
</dbReference>
<dbReference type="GO" id="GO:0006402">
    <property type="term" value="P:mRNA catabolic process"/>
    <property type="evidence" value="ECO:0007669"/>
    <property type="project" value="UniProtKB-UniRule"/>
</dbReference>
<dbReference type="GO" id="GO:0006396">
    <property type="term" value="P:RNA processing"/>
    <property type="evidence" value="ECO:0007669"/>
    <property type="project" value="InterPro"/>
</dbReference>
<dbReference type="CDD" id="cd02393">
    <property type="entry name" value="KH-I_PNPase"/>
    <property type="match status" value="1"/>
</dbReference>
<dbReference type="CDD" id="cd11363">
    <property type="entry name" value="RNase_PH_PNPase_1"/>
    <property type="match status" value="1"/>
</dbReference>
<dbReference type="CDD" id="cd11364">
    <property type="entry name" value="RNase_PH_PNPase_2"/>
    <property type="match status" value="1"/>
</dbReference>
<dbReference type="CDD" id="cd04472">
    <property type="entry name" value="S1_PNPase"/>
    <property type="match status" value="1"/>
</dbReference>
<dbReference type="FunFam" id="2.40.50.140:FF:000023">
    <property type="entry name" value="Polyribonucleotide nucleotidyltransferase"/>
    <property type="match status" value="1"/>
</dbReference>
<dbReference type="FunFam" id="3.30.1370.10:FF:000001">
    <property type="entry name" value="Polyribonucleotide nucleotidyltransferase"/>
    <property type="match status" value="1"/>
</dbReference>
<dbReference type="FunFam" id="3.30.230.70:FF:000001">
    <property type="entry name" value="Polyribonucleotide nucleotidyltransferase"/>
    <property type="match status" value="1"/>
</dbReference>
<dbReference type="FunFam" id="3.30.230.70:FF:000002">
    <property type="entry name" value="Polyribonucleotide nucleotidyltransferase"/>
    <property type="match status" value="1"/>
</dbReference>
<dbReference type="Gene3D" id="3.30.230.70">
    <property type="entry name" value="GHMP Kinase, N-terminal domain"/>
    <property type="match status" value="2"/>
</dbReference>
<dbReference type="Gene3D" id="3.30.1370.10">
    <property type="entry name" value="K Homology domain, type 1"/>
    <property type="match status" value="1"/>
</dbReference>
<dbReference type="Gene3D" id="2.40.50.140">
    <property type="entry name" value="Nucleic acid-binding proteins"/>
    <property type="match status" value="1"/>
</dbReference>
<dbReference type="HAMAP" id="MF_01595">
    <property type="entry name" value="PNPase"/>
    <property type="match status" value="1"/>
</dbReference>
<dbReference type="InterPro" id="IPR001247">
    <property type="entry name" value="ExoRNase_PH_dom1"/>
</dbReference>
<dbReference type="InterPro" id="IPR015847">
    <property type="entry name" value="ExoRNase_PH_dom2"/>
</dbReference>
<dbReference type="InterPro" id="IPR036345">
    <property type="entry name" value="ExoRNase_PH_dom2_sf"/>
</dbReference>
<dbReference type="InterPro" id="IPR004087">
    <property type="entry name" value="KH_dom"/>
</dbReference>
<dbReference type="InterPro" id="IPR004088">
    <property type="entry name" value="KH_dom_type_1"/>
</dbReference>
<dbReference type="InterPro" id="IPR036612">
    <property type="entry name" value="KH_dom_type_1_sf"/>
</dbReference>
<dbReference type="InterPro" id="IPR012340">
    <property type="entry name" value="NA-bd_OB-fold"/>
</dbReference>
<dbReference type="InterPro" id="IPR012162">
    <property type="entry name" value="PNPase"/>
</dbReference>
<dbReference type="InterPro" id="IPR027408">
    <property type="entry name" value="PNPase/RNase_PH_dom_sf"/>
</dbReference>
<dbReference type="InterPro" id="IPR015848">
    <property type="entry name" value="PNPase_PH_RNA-bd_bac/org-type"/>
</dbReference>
<dbReference type="InterPro" id="IPR036456">
    <property type="entry name" value="PNPase_PH_RNA-bd_sf"/>
</dbReference>
<dbReference type="InterPro" id="IPR020568">
    <property type="entry name" value="Ribosomal_Su5_D2-typ_SF"/>
</dbReference>
<dbReference type="InterPro" id="IPR003029">
    <property type="entry name" value="S1_domain"/>
</dbReference>
<dbReference type="NCBIfam" id="TIGR03591">
    <property type="entry name" value="polynuc_phos"/>
    <property type="match status" value="1"/>
</dbReference>
<dbReference type="NCBIfam" id="NF008805">
    <property type="entry name" value="PRK11824.1"/>
    <property type="match status" value="1"/>
</dbReference>
<dbReference type="PANTHER" id="PTHR11252">
    <property type="entry name" value="POLYRIBONUCLEOTIDE NUCLEOTIDYLTRANSFERASE"/>
    <property type="match status" value="1"/>
</dbReference>
<dbReference type="PANTHER" id="PTHR11252:SF0">
    <property type="entry name" value="POLYRIBONUCLEOTIDE NUCLEOTIDYLTRANSFERASE 1, MITOCHONDRIAL"/>
    <property type="match status" value="1"/>
</dbReference>
<dbReference type="Pfam" id="PF00013">
    <property type="entry name" value="KH_1"/>
    <property type="match status" value="1"/>
</dbReference>
<dbReference type="Pfam" id="PF03726">
    <property type="entry name" value="PNPase"/>
    <property type="match status" value="1"/>
</dbReference>
<dbReference type="Pfam" id="PF01138">
    <property type="entry name" value="RNase_PH"/>
    <property type="match status" value="2"/>
</dbReference>
<dbReference type="Pfam" id="PF03725">
    <property type="entry name" value="RNase_PH_C"/>
    <property type="match status" value="2"/>
</dbReference>
<dbReference type="Pfam" id="PF00575">
    <property type="entry name" value="S1"/>
    <property type="match status" value="1"/>
</dbReference>
<dbReference type="PIRSF" id="PIRSF005499">
    <property type="entry name" value="PNPase"/>
    <property type="match status" value="1"/>
</dbReference>
<dbReference type="SMART" id="SM00322">
    <property type="entry name" value="KH"/>
    <property type="match status" value="1"/>
</dbReference>
<dbReference type="SMART" id="SM00316">
    <property type="entry name" value="S1"/>
    <property type="match status" value="1"/>
</dbReference>
<dbReference type="SUPFAM" id="SSF54791">
    <property type="entry name" value="Eukaryotic type KH-domain (KH-domain type I)"/>
    <property type="match status" value="1"/>
</dbReference>
<dbReference type="SUPFAM" id="SSF50249">
    <property type="entry name" value="Nucleic acid-binding proteins"/>
    <property type="match status" value="1"/>
</dbReference>
<dbReference type="SUPFAM" id="SSF46915">
    <property type="entry name" value="Polynucleotide phosphorylase/guanosine pentaphosphate synthase (PNPase/GPSI), domain 3"/>
    <property type="match status" value="1"/>
</dbReference>
<dbReference type="SUPFAM" id="SSF55666">
    <property type="entry name" value="Ribonuclease PH domain 2-like"/>
    <property type="match status" value="2"/>
</dbReference>
<dbReference type="SUPFAM" id="SSF54211">
    <property type="entry name" value="Ribosomal protein S5 domain 2-like"/>
    <property type="match status" value="2"/>
</dbReference>
<dbReference type="PROSITE" id="PS50084">
    <property type="entry name" value="KH_TYPE_1"/>
    <property type="match status" value="1"/>
</dbReference>
<dbReference type="PROSITE" id="PS50126">
    <property type="entry name" value="S1"/>
    <property type="match status" value="1"/>
</dbReference>
<sequence>MLNPIVRKFQYGQHTVTLETGMMARQATAAVMVSMDDTAVFVTVVGQKKAKPGQDFFPLTVNYQERTYAAGKIPGGFFRREGRPSEGETLIARLIDRPVRPLFPEGFVNEVQVIATVVSVNPQVNPDIVAMIGASAALSLSGIPFNGPIGAARVGYINDQYVLNPTQEELKSSKLDLVVAGTEAAVLMVESEAELLSEDQMLGAVVFGHEQQQIVIQNINDLVKEAGKPRWDWQPEAVNEALNARVAALAESRLSDAYRITDKQERYAQVDVIKSETIATLVAEDETLDANELGEILHAIEKNVVRSRVLAGEPRIDGREKDMIRGLDVRTGVLPRTHGSALFTRGETQALVTATLGTARDAQNIDELMGERTDSFLFHYNFPPYSVGETGMVGSPKRREIGHGRLAKRGVLAVMPTIEEFPYTVRVVSEITESNGSSSMASVCGASLALMDAGVPVKAAVAGIAMGLVKEGDNFVVLSDILGDEDHLGDMDFKVAGSRDGISALQMDIKIEGITKEIMQVALNQAKGARLHILGVMEQAINAPRGDISEFAPRIHTIKINPDKIKDVIGKGGSVIRALTEETGTTIEIEDDGTVKIAATDGDKAQHAIRRIEEITAEIEVGRIYNGKVTRIVDFGAFVAIGGGKEGLVHISQIADKRVEKVTDYLQMGQEVPVKVLEVDRQGRVRLSIKEATEQTPSAAAPEAPAAEQGE</sequence>
<comment type="function">
    <text evidence="1">Involved in mRNA degradation. Catalyzes the phosphorolysis of single-stranded polyribonucleotides processively in the 3'- to 5'-direction.</text>
</comment>
<comment type="catalytic activity">
    <reaction evidence="1">
        <text>RNA(n+1) + phosphate = RNA(n) + a ribonucleoside 5'-diphosphate</text>
        <dbReference type="Rhea" id="RHEA:22096"/>
        <dbReference type="Rhea" id="RHEA-COMP:14527"/>
        <dbReference type="Rhea" id="RHEA-COMP:17342"/>
        <dbReference type="ChEBI" id="CHEBI:43474"/>
        <dbReference type="ChEBI" id="CHEBI:57930"/>
        <dbReference type="ChEBI" id="CHEBI:140395"/>
        <dbReference type="EC" id="2.7.7.8"/>
    </reaction>
</comment>
<comment type="cofactor">
    <cofactor evidence="1">
        <name>Mg(2+)</name>
        <dbReference type="ChEBI" id="CHEBI:18420"/>
    </cofactor>
</comment>
<comment type="subunit">
    <text evidence="1">Component of the RNA degradosome, which is a multiprotein complex involved in RNA processing and mRNA degradation.</text>
</comment>
<comment type="subcellular location">
    <subcellularLocation>
        <location evidence="1">Cytoplasm</location>
    </subcellularLocation>
</comment>
<comment type="similarity">
    <text evidence="1">Belongs to the polyribonucleotide nucleotidyltransferase family.</text>
</comment>
<feature type="chain" id="PRO_0000329687" description="Polyribonucleotide nucleotidyltransferase">
    <location>
        <begin position="1"/>
        <end position="711"/>
    </location>
</feature>
<feature type="domain" description="KH" evidence="1">
    <location>
        <begin position="553"/>
        <end position="612"/>
    </location>
</feature>
<feature type="domain" description="S1 motif" evidence="1">
    <location>
        <begin position="622"/>
        <end position="690"/>
    </location>
</feature>
<feature type="region of interest" description="Disordered" evidence="2">
    <location>
        <begin position="689"/>
        <end position="711"/>
    </location>
</feature>
<feature type="compositionally biased region" description="Low complexity" evidence="2">
    <location>
        <begin position="694"/>
        <end position="711"/>
    </location>
</feature>
<feature type="binding site" evidence="1">
    <location>
        <position position="486"/>
    </location>
    <ligand>
        <name>Mg(2+)</name>
        <dbReference type="ChEBI" id="CHEBI:18420"/>
    </ligand>
</feature>
<feature type="binding site" evidence="1">
    <location>
        <position position="492"/>
    </location>
    <ligand>
        <name>Mg(2+)</name>
        <dbReference type="ChEBI" id="CHEBI:18420"/>
    </ligand>
</feature>
<reference key="1">
    <citation type="submission" date="2006-09" db="EMBL/GenBank/DDBJ databases">
        <authorList>
            <consortium name="The Klebsiella pneumonia Genome Sequencing Project"/>
            <person name="McClelland M."/>
            <person name="Sanderson E.K."/>
            <person name="Spieth J."/>
            <person name="Clifton W.S."/>
            <person name="Latreille P."/>
            <person name="Sabo A."/>
            <person name="Pepin K."/>
            <person name="Bhonagiri V."/>
            <person name="Porwollik S."/>
            <person name="Ali J."/>
            <person name="Wilson R.K."/>
        </authorList>
    </citation>
    <scope>NUCLEOTIDE SEQUENCE [LARGE SCALE GENOMIC DNA]</scope>
    <source>
        <strain>ATCC 700721 / MGH 78578</strain>
    </source>
</reference>